<dbReference type="EMBL" id="M18283">
    <property type="protein sequence ID" value="AAA27063.1"/>
    <property type="molecule type" value="Genomic_DNA"/>
</dbReference>
<dbReference type="PIR" id="B28393">
    <property type="entry name" value="B28393"/>
</dbReference>
<dbReference type="SMR" id="P55223"/>
<dbReference type="eggNOG" id="COG3539">
    <property type="taxonomic scope" value="Bacteria"/>
</dbReference>
<dbReference type="GO" id="GO:0009289">
    <property type="term" value="C:pilus"/>
    <property type="evidence" value="ECO:0007669"/>
    <property type="project" value="UniProtKB-SubCell"/>
</dbReference>
<dbReference type="GO" id="GO:0043709">
    <property type="term" value="P:cell adhesion involved in single-species biofilm formation"/>
    <property type="evidence" value="ECO:0007669"/>
    <property type="project" value="TreeGrafter"/>
</dbReference>
<dbReference type="FunFam" id="2.60.40.1090:FF:000001">
    <property type="entry name" value="Type-1 fimbrial major subunit"/>
    <property type="match status" value="1"/>
</dbReference>
<dbReference type="Gene3D" id="2.60.40.1090">
    <property type="entry name" value="Fimbrial-type adhesion domain"/>
    <property type="match status" value="1"/>
</dbReference>
<dbReference type="InterPro" id="IPR000259">
    <property type="entry name" value="Adhesion_dom_fimbrial"/>
</dbReference>
<dbReference type="InterPro" id="IPR036937">
    <property type="entry name" value="Adhesion_dom_fimbrial_sf"/>
</dbReference>
<dbReference type="InterPro" id="IPR008966">
    <property type="entry name" value="Adhesion_dom_sf"/>
</dbReference>
<dbReference type="InterPro" id="IPR050263">
    <property type="entry name" value="Bact_Fimbrial_Adh_Pro"/>
</dbReference>
<dbReference type="NCBIfam" id="NF011741">
    <property type="entry name" value="PRK15194.1"/>
    <property type="match status" value="1"/>
</dbReference>
<dbReference type="PANTHER" id="PTHR33420">
    <property type="entry name" value="FIMBRIAL SUBUNIT ELFA-RELATED"/>
    <property type="match status" value="1"/>
</dbReference>
<dbReference type="PANTHER" id="PTHR33420:SF12">
    <property type="entry name" value="FIMBRIN-LIKE PROTEIN FIMI-RELATED"/>
    <property type="match status" value="1"/>
</dbReference>
<dbReference type="Pfam" id="PF00419">
    <property type="entry name" value="Fimbrial"/>
    <property type="match status" value="1"/>
</dbReference>
<dbReference type="SUPFAM" id="SSF49401">
    <property type="entry name" value="Bacterial adhesins"/>
    <property type="match status" value="1"/>
</dbReference>
<accession>P55223</accession>
<name>FIM11_SALTM</name>
<organism>
    <name type="scientific">Salmonella typhimurium</name>
    <dbReference type="NCBI Taxonomy" id="90371"/>
    <lineage>
        <taxon>Bacteria</taxon>
        <taxon>Pseudomonadati</taxon>
        <taxon>Pseudomonadota</taxon>
        <taxon>Gammaproteobacteria</taxon>
        <taxon>Enterobacterales</taxon>
        <taxon>Enterobacteriaceae</taxon>
        <taxon>Salmonella</taxon>
    </lineage>
</organism>
<keyword id="KW-1015">Disulfide bond</keyword>
<keyword id="KW-0281">Fimbrium</keyword>
<keyword id="KW-0732">Signal</keyword>
<sequence>MRHKLMTSTIASLMFVAAAAVAADPTPVSVVGGTIHFEGKLVNAACAVSTKSADQTVTLGQYRTASFTAIGNTTAQVPFSIVLNDCDPKVAATAAVAFSGQADNTTPNLLAVSSADNSTTATGVGIEILDNTSSPLKPDGATFSAKQSLVEGTNTLRFTARYKATAAATTPGQANADATFIMKYE</sequence>
<reference key="1">
    <citation type="journal article" date="1987" name="J. Bacteriol.">
        <title>Nucleotide sequences of the genes encoding type 1 fimbrial subunits of Klebsiella pneumoniae and Salmonella typhimurium.</title>
        <authorList>
            <person name="Purcell B.K."/>
            <person name="Pruckler J."/>
            <person name="Clegg S."/>
        </authorList>
    </citation>
    <scope>NUCLEOTIDE SEQUENCE [GENOMIC DNA]</scope>
</reference>
<comment type="subcellular location">
    <subcellularLocation>
        <location>Fimbrium</location>
    </subcellularLocation>
</comment>
<comment type="similarity">
    <text evidence="2">Belongs to the fimbrial protein family.</text>
</comment>
<proteinExistence type="inferred from homology"/>
<protein>
    <recommendedName>
        <fullName>Fimbrial subunit type 1</fullName>
    </recommendedName>
</protein>
<feature type="signal peptide" evidence="1">
    <location>
        <begin position="1"/>
        <end position="22"/>
    </location>
</feature>
<feature type="chain" id="PRO_0000009173" description="Fimbrial subunit type 1">
    <location>
        <begin position="23"/>
        <end position="185"/>
    </location>
</feature>
<feature type="disulfide bond" evidence="2">
    <location>
        <begin position="46"/>
        <end position="86"/>
    </location>
</feature>
<evidence type="ECO:0000255" key="1"/>
<evidence type="ECO:0000305" key="2"/>